<organism>
    <name type="scientific">Emericella nidulans (strain FGSC A4 / ATCC 38163 / CBS 112.46 / NRRL 194 / M139)</name>
    <name type="common">Aspergillus nidulans</name>
    <dbReference type="NCBI Taxonomy" id="227321"/>
    <lineage>
        <taxon>Eukaryota</taxon>
        <taxon>Fungi</taxon>
        <taxon>Dikarya</taxon>
        <taxon>Ascomycota</taxon>
        <taxon>Pezizomycotina</taxon>
        <taxon>Eurotiomycetes</taxon>
        <taxon>Eurotiomycetidae</taxon>
        <taxon>Eurotiales</taxon>
        <taxon>Aspergillaceae</taxon>
        <taxon>Aspergillus</taxon>
        <taxon>Aspergillus subgen. Nidulantes</taxon>
    </lineage>
</organism>
<feature type="chain" id="PRO_0000399682" description="Conserved oligomeric Golgi complex subunit 6">
    <location>
        <begin position="1"/>
        <end position="739"/>
    </location>
</feature>
<feature type="region of interest" description="Disordered" evidence="2">
    <location>
        <begin position="1"/>
        <end position="35"/>
    </location>
</feature>
<feature type="region of interest" description="Disordered" evidence="2">
    <location>
        <begin position="686"/>
        <end position="706"/>
    </location>
</feature>
<feature type="compositionally biased region" description="Acidic residues" evidence="2">
    <location>
        <begin position="693"/>
        <end position="706"/>
    </location>
</feature>
<keyword id="KW-0333">Golgi apparatus</keyword>
<keyword id="KW-0472">Membrane</keyword>
<keyword id="KW-0653">Protein transport</keyword>
<keyword id="KW-1185">Reference proteome</keyword>
<keyword id="KW-0813">Transport</keyword>
<dbReference type="EMBL" id="AACD01000061">
    <property type="protein sequence ID" value="EAA59931.1"/>
    <property type="status" value="ALT_SEQ"/>
    <property type="molecule type" value="Genomic_DNA"/>
</dbReference>
<dbReference type="EMBL" id="BN001302">
    <property type="protein sequence ID" value="CBF75527.1"/>
    <property type="molecule type" value="Genomic_DNA"/>
</dbReference>
<dbReference type="RefSeq" id="XP_661327.1">
    <property type="nucleotide sequence ID" value="XM_656235.1"/>
</dbReference>
<dbReference type="FunCoup" id="C8V7C6">
    <property type="interactions" value="262"/>
</dbReference>
<dbReference type="STRING" id="227321.C8V7C6"/>
<dbReference type="EnsemblFungi" id="CBF75527">
    <property type="protein sequence ID" value="CBF75527"/>
    <property type="gene ID" value="ANIA_10441"/>
</dbReference>
<dbReference type="VEuPathDB" id="FungiDB:AN10441"/>
<dbReference type="eggNOG" id="KOG3758">
    <property type="taxonomic scope" value="Eukaryota"/>
</dbReference>
<dbReference type="HOGENOM" id="CLU_278982_0_0_1"/>
<dbReference type="InParanoid" id="C8V7C6"/>
<dbReference type="OMA" id="HSCLDFF"/>
<dbReference type="OrthoDB" id="272987at2759"/>
<dbReference type="Proteomes" id="UP000000560">
    <property type="component" value="Chromosome II"/>
</dbReference>
<dbReference type="GO" id="GO:0000139">
    <property type="term" value="C:Golgi membrane"/>
    <property type="evidence" value="ECO:0007669"/>
    <property type="project" value="UniProtKB-SubCell"/>
</dbReference>
<dbReference type="GO" id="GO:0017119">
    <property type="term" value="C:Golgi transport complex"/>
    <property type="evidence" value="ECO:0000318"/>
    <property type="project" value="GO_Central"/>
</dbReference>
<dbReference type="GO" id="GO:0006891">
    <property type="term" value="P:intra-Golgi vesicle-mediated transport"/>
    <property type="evidence" value="ECO:0000318"/>
    <property type="project" value="GO_Central"/>
</dbReference>
<dbReference type="GO" id="GO:0015031">
    <property type="term" value="P:protein transport"/>
    <property type="evidence" value="ECO:0007669"/>
    <property type="project" value="UniProtKB-KW"/>
</dbReference>
<dbReference type="InterPro" id="IPR010490">
    <property type="entry name" value="COG6"/>
</dbReference>
<dbReference type="InterPro" id="IPR048369">
    <property type="entry name" value="COG6_C"/>
</dbReference>
<dbReference type="InterPro" id="IPR048368">
    <property type="entry name" value="COG6_N"/>
</dbReference>
<dbReference type="PANTHER" id="PTHR21506">
    <property type="entry name" value="COMPONENT OF OLIGOMERIC GOLGI COMPLEX 6"/>
    <property type="match status" value="1"/>
</dbReference>
<dbReference type="PANTHER" id="PTHR21506:SF0">
    <property type="entry name" value="CONSERVED OLIGOMERIC GOLGI COMPLEX SUBUNIT 6"/>
    <property type="match status" value="1"/>
</dbReference>
<dbReference type="Pfam" id="PF20653">
    <property type="entry name" value="COG6_C"/>
    <property type="match status" value="1"/>
</dbReference>
<dbReference type="Pfam" id="PF06419">
    <property type="entry name" value="COG6_N"/>
    <property type="match status" value="1"/>
</dbReference>
<dbReference type="SMART" id="SM01087">
    <property type="entry name" value="COG6"/>
    <property type="match status" value="1"/>
</dbReference>
<reference key="1">
    <citation type="journal article" date="2005" name="Nature">
        <title>Sequencing of Aspergillus nidulans and comparative analysis with A. fumigatus and A. oryzae.</title>
        <authorList>
            <person name="Galagan J.E."/>
            <person name="Calvo S.E."/>
            <person name="Cuomo C."/>
            <person name="Ma L.-J."/>
            <person name="Wortman J.R."/>
            <person name="Batzoglou S."/>
            <person name="Lee S.-I."/>
            <person name="Bastuerkmen M."/>
            <person name="Spevak C.C."/>
            <person name="Clutterbuck J."/>
            <person name="Kapitonov V."/>
            <person name="Jurka J."/>
            <person name="Scazzocchio C."/>
            <person name="Farman M.L."/>
            <person name="Butler J."/>
            <person name="Purcell S."/>
            <person name="Harris S."/>
            <person name="Braus G.H."/>
            <person name="Draht O."/>
            <person name="Busch S."/>
            <person name="D'Enfert C."/>
            <person name="Bouchier C."/>
            <person name="Goldman G.H."/>
            <person name="Bell-Pedersen D."/>
            <person name="Griffiths-Jones S."/>
            <person name="Doonan J.H."/>
            <person name="Yu J."/>
            <person name="Vienken K."/>
            <person name="Pain A."/>
            <person name="Freitag M."/>
            <person name="Selker E.U."/>
            <person name="Archer D.B."/>
            <person name="Penalva M.A."/>
            <person name="Oakley B.R."/>
            <person name="Momany M."/>
            <person name="Tanaka T."/>
            <person name="Kumagai T."/>
            <person name="Asai K."/>
            <person name="Machida M."/>
            <person name="Nierman W.C."/>
            <person name="Denning D.W."/>
            <person name="Caddick M.X."/>
            <person name="Hynes M."/>
            <person name="Paoletti M."/>
            <person name="Fischer R."/>
            <person name="Miller B.L."/>
            <person name="Dyer P.S."/>
            <person name="Sachs M.S."/>
            <person name="Osmani S.A."/>
            <person name="Birren B.W."/>
        </authorList>
    </citation>
    <scope>NUCLEOTIDE SEQUENCE [LARGE SCALE GENOMIC DNA]</scope>
    <source>
        <strain>FGSC A4 / ATCC 38163 / CBS 112.46 / NRRL 194 / M139</strain>
    </source>
</reference>
<reference key="2">
    <citation type="journal article" date="2009" name="Fungal Genet. Biol.">
        <title>The 2008 update of the Aspergillus nidulans genome annotation: a community effort.</title>
        <authorList>
            <person name="Wortman J.R."/>
            <person name="Gilsenan J.M."/>
            <person name="Joardar V."/>
            <person name="Deegan J."/>
            <person name="Clutterbuck J."/>
            <person name="Andersen M.R."/>
            <person name="Archer D."/>
            <person name="Bencina M."/>
            <person name="Braus G."/>
            <person name="Coutinho P."/>
            <person name="von Dohren H."/>
            <person name="Doonan J."/>
            <person name="Driessen A.J."/>
            <person name="Durek P."/>
            <person name="Espeso E."/>
            <person name="Fekete E."/>
            <person name="Flipphi M."/>
            <person name="Estrada C.G."/>
            <person name="Geysens S."/>
            <person name="Goldman G."/>
            <person name="de Groot P.W."/>
            <person name="Hansen K."/>
            <person name="Harris S.D."/>
            <person name="Heinekamp T."/>
            <person name="Helmstaedt K."/>
            <person name="Henrissat B."/>
            <person name="Hofmann G."/>
            <person name="Homan T."/>
            <person name="Horio T."/>
            <person name="Horiuchi H."/>
            <person name="James S."/>
            <person name="Jones M."/>
            <person name="Karaffa L."/>
            <person name="Karanyi Z."/>
            <person name="Kato M."/>
            <person name="Keller N."/>
            <person name="Kelly D.E."/>
            <person name="Kiel J.A."/>
            <person name="Kim J.M."/>
            <person name="van der Klei I.J."/>
            <person name="Klis F.M."/>
            <person name="Kovalchuk A."/>
            <person name="Krasevec N."/>
            <person name="Kubicek C.P."/>
            <person name="Liu B."/>
            <person name="Maccabe A."/>
            <person name="Meyer V."/>
            <person name="Mirabito P."/>
            <person name="Miskei M."/>
            <person name="Mos M."/>
            <person name="Mullins J."/>
            <person name="Nelson D.R."/>
            <person name="Nielsen J."/>
            <person name="Oakley B.R."/>
            <person name="Osmani S.A."/>
            <person name="Pakula T."/>
            <person name="Paszewski A."/>
            <person name="Paulsen I."/>
            <person name="Pilsyk S."/>
            <person name="Pocsi I."/>
            <person name="Punt P.J."/>
            <person name="Ram A.F."/>
            <person name="Ren Q."/>
            <person name="Robellet X."/>
            <person name="Robson G."/>
            <person name="Seiboth B."/>
            <person name="van Solingen P."/>
            <person name="Specht T."/>
            <person name="Sun J."/>
            <person name="Taheri-Talesh N."/>
            <person name="Takeshita N."/>
            <person name="Ussery D."/>
            <person name="vanKuyk P.A."/>
            <person name="Visser H."/>
            <person name="van de Vondervoort P.J."/>
            <person name="de Vries R.P."/>
            <person name="Walton J."/>
            <person name="Xiang X."/>
            <person name="Xiong Y."/>
            <person name="Zeng A.P."/>
            <person name="Brandt B.W."/>
            <person name="Cornell M.J."/>
            <person name="van den Hondel C.A."/>
            <person name="Visser J."/>
            <person name="Oliver S.G."/>
            <person name="Turner G."/>
        </authorList>
    </citation>
    <scope>GENOME REANNOTATION</scope>
    <source>
        <strain>FGSC A4 / ATCC 38163 / CBS 112.46 / NRRL 194 / M139</strain>
    </source>
</reference>
<evidence type="ECO:0000250" key="1"/>
<evidence type="ECO:0000256" key="2">
    <source>
        <dbReference type="SAM" id="MobiDB-lite"/>
    </source>
</evidence>
<evidence type="ECO:0000305" key="3"/>
<protein>
    <recommendedName>
        <fullName>Conserved oligomeric Golgi complex subunit 6</fullName>
        <shortName>COG complex subunit 6</shortName>
    </recommendedName>
    <alternativeName>
        <fullName>Component of oligomeric Golgi complex 6</fullName>
    </alternativeName>
</protein>
<comment type="function">
    <text evidence="1">Acts as a component of the peripheral membrane COG complex that is involved in intra-Golgi protein trafficking. COG is located at the cis-Golgi, and regulates tethering of retrograde intra-Golgi vesicles and possibly a number of other membrane trafficking events (By similarity).</text>
</comment>
<comment type="subcellular location">
    <subcellularLocation>
        <location evidence="1">Golgi apparatus membrane</location>
        <topology evidence="1">Peripheral membrane protein</topology>
    </subcellularLocation>
</comment>
<comment type="similarity">
    <text evidence="3">Belongs to the COG6 family.</text>
</comment>
<comment type="sequence caution" evidence="3">
    <conflict type="erroneous gene model prediction">
        <sequence resource="EMBL-CDS" id="EAA59931"/>
    </conflict>
    <text>The predicted gene AN3723 has been split into 2 genes: AN10466 and AN10441.</text>
</comment>
<sequence length="739" mass="81668">MATGSYFPPPGAPSSISPRNSTPALSPLSPPLQQRSNALSNRLTSVLSVSYADSDIRDALETLSLRGVHNTAEVRRQLRLDVQKEVVDCNAEIVRDFGNVAEQLKRIGSVISSLKETCDEMRKHIVLAKQDTTPVLEEASALMIQKQEAETKQRLLDAFTKHFIVSEEELLALTSIEEPIDDEFFDVLARVKQVHRDCEALLGAEHERLGLELMEKSSRSLNSAYQKLYRWIQKEFKSLNLEDPQISGTIRQALRVLAERPSLFQTCLDFFAEARDYVLSDAFHYALTDAVSGGDSAVKPIEFSAHDPLRYIGDMLAWVHSTTVSEREALETLFVAEGDELAKGIQAGLNSEPWSRIDEDEEMTFDGQKALSDLVSRDLIGVARSLRQRVELVIQGHDDPVTCYKVINLLSFYQTIFSKLVGPNSNLAELLKALEKFTLNHFQTIMRDEVNNISTDHSALAPPDDLSAPQFLHDSLEVLTALMKTHEASLGTEDPSITSESEENEFTPVLHAALDPFFTLAKASADELPDPTARAIYLTNVHITTRSTISPYPFATSTHLPPLSATLSTLRVELLESQHRYLLDTSGLQVLLTALQPFSQSNESGTEKDLAAIADLPAFQAEALISTSQQLDDFLPSALMDATDNLKRVQSATFVKSVTEEAVEAFCRDFEFVEGMIIGADEARGVGQSDGAVNEEGEEGDGDGDGEVELELEVEQRGQGQSLRKLFPRTTGEIRVLLS</sequence>
<proteinExistence type="inferred from homology"/>
<accession>C8V7C6</accession>
<accession>Q5B6V7</accession>
<name>COG6_EMENI</name>
<gene>
    <name type="primary">cog6</name>
    <name type="ORF">AN10441</name>
</gene>